<reference key="1">
    <citation type="journal article" date="2005" name="Nature">
        <title>Generation and annotation of the DNA sequences of human chromosomes 2 and 4.</title>
        <authorList>
            <person name="Hillier L.W."/>
            <person name="Graves T.A."/>
            <person name="Fulton R.S."/>
            <person name="Fulton L.A."/>
            <person name="Pepin K.H."/>
            <person name="Minx P."/>
            <person name="Wagner-McPherson C."/>
            <person name="Layman D."/>
            <person name="Wylie K."/>
            <person name="Sekhon M."/>
            <person name="Becker M.C."/>
            <person name="Fewell G.A."/>
            <person name="Delehaunty K.D."/>
            <person name="Miner T.L."/>
            <person name="Nash W.E."/>
            <person name="Kremitzki C."/>
            <person name="Oddy L."/>
            <person name="Du H."/>
            <person name="Sun H."/>
            <person name="Bradshaw-Cordum H."/>
            <person name="Ali J."/>
            <person name="Carter J."/>
            <person name="Cordes M."/>
            <person name="Harris A."/>
            <person name="Isak A."/>
            <person name="van Brunt A."/>
            <person name="Nguyen C."/>
            <person name="Du F."/>
            <person name="Courtney L."/>
            <person name="Kalicki J."/>
            <person name="Ozersky P."/>
            <person name="Abbott S."/>
            <person name="Armstrong J."/>
            <person name="Belter E.A."/>
            <person name="Caruso L."/>
            <person name="Cedroni M."/>
            <person name="Cotton M."/>
            <person name="Davidson T."/>
            <person name="Desai A."/>
            <person name="Elliott G."/>
            <person name="Erb T."/>
            <person name="Fronick C."/>
            <person name="Gaige T."/>
            <person name="Haakenson W."/>
            <person name="Haglund K."/>
            <person name="Holmes A."/>
            <person name="Harkins R."/>
            <person name="Kim K."/>
            <person name="Kruchowski S.S."/>
            <person name="Strong C.M."/>
            <person name="Grewal N."/>
            <person name="Goyea E."/>
            <person name="Hou S."/>
            <person name="Levy A."/>
            <person name="Martinka S."/>
            <person name="Mead K."/>
            <person name="McLellan M.D."/>
            <person name="Meyer R."/>
            <person name="Randall-Maher J."/>
            <person name="Tomlinson C."/>
            <person name="Dauphin-Kohlberg S."/>
            <person name="Kozlowicz-Reilly A."/>
            <person name="Shah N."/>
            <person name="Swearengen-Shahid S."/>
            <person name="Snider J."/>
            <person name="Strong J.T."/>
            <person name="Thompson J."/>
            <person name="Yoakum M."/>
            <person name="Leonard S."/>
            <person name="Pearman C."/>
            <person name="Trani L."/>
            <person name="Radionenko M."/>
            <person name="Waligorski J.E."/>
            <person name="Wang C."/>
            <person name="Rock S.M."/>
            <person name="Tin-Wollam A.-M."/>
            <person name="Maupin R."/>
            <person name="Latreille P."/>
            <person name="Wendl M.C."/>
            <person name="Yang S.-P."/>
            <person name="Pohl C."/>
            <person name="Wallis J.W."/>
            <person name="Spieth J."/>
            <person name="Bieri T.A."/>
            <person name="Berkowicz N."/>
            <person name="Nelson J.O."/>
            <person name="Osborne J."/>
            <person name="Ding L."/>
            <person name="Meyer R."/>
            <person name="Sabo A."/>
            <person name="Shotland Y."/>
            <person name="Sinha P."/>
            <person name="Wohldmann P.E."/>
            <person name="Cook L.L."/>
            <person name="Hickenbotham M.T."/>
            <person name="Eldred J."/>
            <person name="Williams D."/>
            <person name="Jones T.A."/>
            <person name="She X."/>
            <person name="Ciccarelli F.D."/>
            <person name="Izaurralde E."/>
            <person name="Taylor J."/>
            <person name="Schmutz J."/>
            <person name="Myers R.M."/>
            <person name="Cox D.R."/>
            <person name="Huang X."/>
            <person name="McPherson J.D."/>
            <person name="Mardis E.R."/>
            <person name="Clifton S.W."/>
            <person name="Warren W.C."/>
            <person name="Chinwalla A.T."/>
            <person name="Eddy S.R."/>
            <person name="Marra M.A."/>
            <person name="Ovcharenko I."/>
            <person name="Furey T.S."/>
            <person name="Miller W."/>
            <person name="Eichler E.E."/>
            <person name="Bork P."/>
            <person name="Suyama M."/>
            <person name="Torrents D."/>
            <person name="Waterston R.H."/>
            <person name="Wilson R.K."/>
        </authorList>
    </citation>
    <scope>NUCLEOTIDE SEQUENCE [LARGE SCALE GENOMIC DNA]</scope>
</reference>
<reference key="2">
    <citation type="journal article" date="2004" name="Nat. Biotechnol.">
        <title>Transcriptome characterization elucidates signaling networks that control human ES cell growth and differentiation.</title>
        <authorList>
            <person name="Brandenberger R."/>
            <person name="Wei H."/>
            <person name="Zhang S."/>
            <person name="Lei S."/>
            <person name="Murage J."/>
            <person name="Fisk G.J."/>
            <person name="Li Y."/>
            <person name="Xu C."/>
            <person name="Fang R."/>
            <person name="Guegler K."/>
            <person name="Rao M.S."/>
            <person name="Mandalam R."/>
            <person name="Lebkowski J."/>
            <person name="Stanton L.W."/>
        </authorList>
    </citation>
    <scope>NUCLEOTIDE SEQUENCE [MRNA] OF 101-291</scope>
</reference>
<reference key="3">
    <citation type="journal article" date="2004" name="Genome Res.">
        <title>The status, quality, and expansion of the NIH full-length cDNA project: the Mammalian Gene Collection (MGC).</title>
        <authorList>
            <consortium name="The MGC Project Team"/>
        </authorList>
    </citation>
    <scope>NUCLEOTIDE SEQUENCE [LARGE SCALE MRNA] OF 112-302</scope>
    <source>
        <tissue>Brain</tissue>
        <tissue>PNS</tissue>
    </source>
</reference>
<reference key="4">
    <citation type="journal article" date="2004" name="Nat. Genet.">
        <title>Complete sequencing and characterization of 21,243 full-length human cDNAs.</title>
        <authorList>
            <person name="Ota T."/>
            <person name="Suzuki Y."/>
            <person name="Nishikawa T."/>
            <person name="Otsuki T."/>
            <person name="Sugiyama T."/>
            <person name="Irie R."/>
            <person name="Wakamatsu A."/>
            <person name="Hayashi K."/>
            <person name="Sato H."/>
            <person name="Nagai K."/>
            <person name="Kimura K."/>
            <person name="Makita H."/>
            <person name="Sekine M."/>
            <person name="Obayashi M."/>
            <person name="Nishi T."/>
            <person name="Shibahara T."/>
            <person name="Tanaka T."/>
            <person name="Ishii S."/>
            <person name="Yamamoto J."/>
            <person name="Saito K."/>
            <person name="Kawai Y."/>
            <person name="Isono Y."/>
            <person name="Nakamura Y."/>
            <person name="Nagahari K."/>
            <person name="Murakami K."/>
            <person name="Yasuda T."/>
            <person name="Iwayanagi T."/>
            <person name="Wagatsuma M."/>
            <person name="Shiratori A."/>
            <person name="Sudo H."/>
            <person name="Hosoiri T."/>
            <person name="Kaku Y."/>
            <person name="Kodaira H."/>
            <person name="Kondo H."/>
            <person name="Sugawara M."/>
            <person name="Takahashi M."/>
            <person name="Kanda K."/>
            <person name="Yokoi T."/>
            <person name="Furuya T."/>
            <person name="Kikkawa E."/>
            <person name="Omura Y."/>
            <person name="Abe K."/>
            <person name="Kamihara K."/>
            <person name="Katsuta N."/>
            <person name="Sato K."/>
            <person name="Tanikawa M."/>
            <person name="Yamazaki M."/>
            <person name="Ninomiya K."/>
            <person name="Ishibashi T."/>
            <person name="Yamashita H."/>
            <person name="Murakawa K."/>
            <person name="Fujimori K."/>
            <person name="Tanai H."/>
            <person name="Kimata M."/>
            <person name="Watanabe M."/>
            <person name="Hiraoka S."/>
            <person name="Chiba Y."/>
            <person name="Ishida S."/>
            <person name="Ono Y."/>
            <person name="Takiguchi S."/>
            <person name="Watanabe S."/>
            <person name="Yosida M."/>
            <person name="Hotuta T."/>
            <person name="Kusano J."/>
            <person name="Kanehori K."/>
            <person name="Takahashi-Fujii A."/>
            <person name="Hara H."/>
            <person name="Tanase T.-O."/>
            <person name="Nomura Y."/>
            <person name="Togiya S."/>
            <person name="Komai F."/>
            <person name="Hara R."/>
            <person name="Takeuchi K."/>
            <person name="Arita M."/>
            <person name="Imose N."/>
            <person name="Musashino K."/>
            <person name="Yuuki H."/>
            <person name="Oshima A."/>
            <person name="Sasaki N."/>
            <person name="Aotsuka S."/>
            <person name="Yoshikawa Y."/>
            <person name="Matsunawa H."/>
            <person name="Ichihara T."/>
            <person name="Shiohata N."/>
            <person name="Sano S."/>
            <person name="Moriya S."/>
            <person name="Momiyama H."/>
            <person name="Satoh N."/>
            <person name="Takami S."/>
            <person name="Terashima Y."/>
            <person name="Suzuki O."/>
            <person name="Nakagawa S."/>
            <person name="Senoh A."/>
            <person name="Mizoguchi H."/>
            <person name="Goto Y."/>
            <person name="Shimizu F."/>
            <person name="Wakebe H."/>
            <person name="Hishigaki H."/>
            <person name="Watanabe T."/>
            <person name="Sugiyama A."/>
            <person name="Takemoto M."/>
            <person name="Kawakami B."/>
            <person name="Yamazaki M."/>
            <person name="Watanabe K."/>
            <person name="Kumagai A."/>
            <person name="Itakura S."/>
            <person name="Fukuzumi Y."/>
            <person name="Fujimori Y."/>
            <person name="Komiyama M."/>
            <person name="Tashiro H."/>
            <person name="Tanigami A."/>
            <person name="Fujiwara T."/>
            <person name="Ono T."/>
            <person name="Yamada K."/>
            <person name="Fujii Y."/>
            <person name="Ozaki K."/>
            <person name="Hirao M."/>
            <person name="Ohmori Y."/>
            <person name="Kawabata A."/>
            <person name="Hikiji T."/>
            <person name="Kobatake N."/>
            <person name="Inagaki H."/>
            <person name="Ikema Y."/>
            <person name="Okamoto S."/>
            <person name="Okitani R."/>
            <person name="Kawakami T."/>
            <person name="Noguchi S."/>
            <person name="Itoh T."/>
            <person name="Shigeta K."/>
            <person name="Senba T."/>
            <person name="Matsumura K."/>
            <person name="Nakajima Y."/>
            <person name="Mizuno T."/>
            <person name="Morinaga M."/>
            <person name="Sasaki M."/>
            <person name="Togashi T."/>
            <person name="Oyama M."/>
            <person name="Hata H."/>
            <person name="Watanabe M."/>
            <person name="Komatsu T."/>
            <person name="Mizushima-Sugano J."/>
            <person name="Satoh T."/>
            <person name="Shirai Y."/>
            <person name="Takahashi Y."/>
            <person name="Nakagawa K."/>
            <person name="Okumura K."/>
            <person name="Nagase T."/>
            <person name="Nomura N."/>
            <person name="Kikuchi H."/>
            <person name="Masuho Y."/>
            <person name="Yamashita R."/>
            <person name="Nakai K."/>
            <person name="Yada T."/>
            <person name="Nakamura Y."/>
            <person name="Ohara O."/>
            <person name="Isogai T."/>
            <person name="Sugano S."/>
        </authorList>
    </citation>
    <scope>NUCLEOTIDE SEQUENCE [LARGE SCALE MRNA] OF 117-302</scope>
    <source>
        <tissue>Brain</tissue>
    </source>
</reference>
<reference key="5">
    <citation type="journal article" date="2001" name="Dev. Biol.">
        <title>Overexpression of camello, a member of a novel protein family, reduces blastomere adhesion and inhibits gastrulation in Xenopus laevis.</title>
        <authorList>
            <person name="Popsueva A.E."/>
            <person name="Luchinskaya N.N."/>
            <person name="Ludwig A.V."/>
            <person name="Zinovjeva O.Y."/>
            <person name="Poteryaev D.A."/>
            <person name="Feigelman M.M."/>
            <person name="Ponomarev M.B."/>
            <person name="Berekelya L."/>
            <person name="Belyavsky A.V."/>
        </authorList>
    </citation>
    <scope>IDENTIFICATION</scope>
</reference>
<reference key="6">
    <citation type="journal article" date="2009" name="Neurochem. Int.">
        <title>Evidence for mitochondrial and cytoplasmic N-acetylaspartate synthesis in SH-SY5Y neuroblastoma cells.</title>
        <authorList>
            <person name="Arun P."/>
            <person name="Moffett J.R."/>
            <person name="Namboodiri A.M."/>
        </authorList>
    </citation>
    <scope>FUNCTION</scope>
    <scope>SUBCELLULAR LOCATION</scope>
    <scope>CATALYTIC ACTIVITY</scope>
</reference>
<reference key="7">
    <citation type="journal article" date="2010" name="Biochem. J.">
        <title>Molecular identification of aspartate N-acetyltransferase and its mutation in hypoacetylaspartia.</title>
        <authorList>
            <person name="Wiame E."/>
            <person name="Tyteca D."/>
            <person name="Pierrot N."/>
            <person name="Collard F."/>
            <person name="Amyere M."/>
            <person name="Noel G."/>
            <person name="Desmedt J."/>
            <person name="Nassogne M.C."/>
            <person name="Vikkula M."/>
            <person name="Octave J.N."/>
            <person name="Vincent M.F."/>
            <person name="Courtoy P.J."/>
            <person name="Boltshauser E."/>
            <person name="van Schaftingen E."/>
        </authorList>
    </citation>
    <scope>TISSUE SPECIFICITY</scope>
    <scope>INVOLVEMENT IN NACED</scope>
    <scope>FUNCTION</scope>
    <scope>CATALYTIC ACTIVITY</scope>
</reference>
<reference key="8">
    <citation type="journal article" date="2010" name="Brain Res.">
        <title>Methamphetamine-induced neuronal protein NAT8L is the NAA biosynthetic enzyme: implications for specialized acetyl coenzyme A metabolism in the CNS.</title>
        <authorList>
            <person name="Ariyannur P.S."/>
            <person name="Moffett J.R."/>
            <person name="Manickam P."/>
            <person name="Pattabiraman N."/>
            <person name="Arun P."/>
            <person name="Nitta A."/>
            <person name="Nabeshima T."/>
            <person name="Madhavarao C.N."/>
            <person name="Namboodiri A.M."/>
        </authorList>
    </citation>
    <scope>ACTIVITY REGULATION</scope>
    <scope>INDUCTION BY METHAMPHETAMINE</scope>
    <scope>SUBCELLULAR LOCATION</scope>
    <scope>FUNCTION</scope>
    <scope>CATALYTIC ACTIVITY</scope>
</reference>
<evidence type="ECO:0000250" key="1">
    <source>
        <dbReference type="UniProtKB" id="D3ZVU9"/>
    </source>
</evidence>
<evidence type="ECO:0000250" key="2">
    <source>
        <dbReference type="UniProtKB" id="Q3UGX3"/>
    </source>
</evidence>
<evidence type="ECO:0000255" key="3"/>
<evidence type="ECO:0000255" key="4">
    <source>
        <dbReference type="PROSITE-ProRule" id="PRU00532"/>
    </source>
</evidence>
<evidence type="ECO:0000256" key="5">
    <source>
        <dbReference type="SAM" id="MobiDB-lite"/>
    </source>
</evidence>
<evidence type="ECO:0000269" key="6">
    <source>
    </source>
</evidence>
<evidence type="ECO:0000269" key="7">
    <source>
    </source>
</evidence>
<evidence type="ECO:0000269" key="8">
    <source>
    </source>
</evidence>
<evidence type="ECO:0000305" key="9"/>
<evidence type="ECO:0000305" key="10">
    <source>
    </source>
</evidence>
<evidence type="ECO:0000312" key="11">
    <source>
        <dbReference type="HGNC" id="HGNC:26742"/>
    </source>
</evidence>
<dbReference type="EC" id="2.3.1.17" evidence="6 7 8"/>
<dbReference type="EMBL" id="AL132868">
    <property type="status" value="NOT_ANNOTATED_CDS"/>
    <property type="molecule type" value="Genomic_DNA"/>
</dbReference>
<dbReference type="EMBL" id="CN256164">
    <property type="status" value="NOT_ANNOTATED_CDS"/>
    <property type="molecule type" value="mRNA"/>
</dbReference>
<dbReference type="EMBL" id="BC093906">
    <property type="protein sequence ID" value="AAH93906.1"/>
    <property type="status" value="ALT_INIT"/>
    <property type="molecule type" value="mRNA"/>
</dbReference>
<dbReference type="EMBL" id="BC093908">
    <property type="protein sequence ID" value="AAH93908.1"/>
    <property type="status" value="ALT_INIT"/>
    <property type="molecule type" value="mRNA"/>
</dbReference>
<dbReference type="EMBL" id="BC103748">
    <property type="protein sequence ID" value="AAI03749.1"/>
    <property type="status" value="ALT_INIT"/>
    <property type="molecule type" value="mRNA"/>
</dbReference>
<dbReference type="EMBL" id="AK094797">
    <property type="protein sequence ID" value="BAC04426.1"/>
    <property type="status" value="ALT_INIT"/>
    <property type="molecule type" value="mRNA"/>
</dbReference>
<dbReference type="CCDS" id="CCDS3359.2"/>
<dbReference type="RefSeq" id="NP_848652.2">
    <property type="nucleotide sequence ID" value="NM_178557.4"/>
</dbReference>
<dbReference type="SMR" id="Q8N9F0"/>
<dbReference type="BioGRID" id="130978">
    <property type="interactions" value="24"/>
</dbReference>
<dbReference type="FunCoup" id="Q8N9F0">
    <property type="interactions" value="465"/>
</dbReference>
<dbReference type="IntAct" id="Q8N9F0">
    <property type="interactions" value="6"/>
</dbReference>
<dbReference type="STRING" id="9606.ENSP00000413064"/>
<dbReference type="GuidetoPHARMACOLOGY" id="3144"/>
<dbReference type="iPTMnet" id="Q8N9F0"/>
<dbReference type="PhosphoSitePlus" id="Q8N9F0"/>
<dbReference type="BioMuta" id="NAT8L"/>
<dbReference type="DMDM" id="259016335"/>
<dbReference type="jPOST" id="Q8N9F0"/>
<dbReference type="MassIVE" id="Q8N9F0"/>
<dbReference type="PaxDb" id="9606-ENSP00000413064"/>
<dbReference type="PeptideAtlas" id="Q8N9F0"/>
<dbReference type="ProteomicsDB" id="72525"/>
<dbReference type="Pumba" id="Q8N9F0"/>
<dbReference type="Antibodypedia" id="50620">
    <property type="antibodies" value="92 antibodies from 24 providers"/>
</dbReference>
<dbReference type="DNASU" id="339983"/>
<dbReference type="Ensembl" id="ENST00000423729.3">
    <property type="protein sequence ID" value="ENSP00000413064.2"/>
    <property type="gene ID" value="ENSG00000185818.8"/>
</dbReference>
<dbReference type="GeneID" id="339983"/>
<dbReference type="KEGG" id="hsa:339983"/>
<dbReference type="MANE-Select" id="ENST00000423729.3">
    <property type="protein sequence ID" value="ENSP00000413064.2"/>
    <property type="RefSeq nucleotide sequence ID" value="NM_178557.4"/>
    <property type="RefSeq protein sequence ID" value="NP_848652.2"/>
</dbReference>
<dbReference type="UCSC" id="uc003geq.3">
    <property type="organism name" value="human"/>
</dbReference>
<dbReference type="AGR" id="HGNC:26742"/>
<dbReference type="CTD" id="339983"/>
<dbReference type="DisGeNET" id="339983"/>
<dbReference type="GeneCards" id="NAT8L"/>
<dbReference type="HGNC" id="HGNC:26742">
    <property type="gene designation" value="NAT8L"/>
</dbReference>
<dbReference type="HPA" id="ENSG00000185818">
    <property type="expression patterns" value="Group enriched (adipose tissue, brain)"/>
</dbReference>
<dbReference type="MalaCards" id="NAT8L"/>
<dbReference type="MIM" id="610647">
    <property type="type" value="gene"/>
</dbReference>
<dbReference type="MIM" id="614063">
    <property type="type" value="phenotype"/>
</dbReference>
<dbReference type="neXtProt" id="NX_Q8N9F0"/>
<dbReference type="OpenTargets" id="ENSG00000185818"/>
<dbReference type="PharmGKB" id="PA162396985"/>
<dbReference type="VEuPathDB" id="HostDB:ENSG00000185818"/>
<dbReference type="eggNOG" id="KOG3139">
    <property type="taxonomic scope" value="Eukaryota"/>
</dbReference>
<dbReference type="GeneTree" id="ENSGT00950000182932"/>
<dbReference type="HOGENOM" id="CLU_013985_10_0_1"/>
<dbReference type="InParanoid" id="Q8N9F0"/>
<dbReference type="OMA" id="FHEGIME"/>
<dbReference type="OrthoDB" id="41532at2759"/>
<dbReference type="PAN-GO" id="Q8N9F0">
    <property type="GO annotations" value="2 GO annotations based on evolutionary models"/>
</dbReference>
<dbReference type="PhylomeDB" id="Q8N9F0"/>
<dbReference type="TreeFam" id="TF324687"/>
<dbReference type="BRENDA" id="2.3.1.17">
    <property type="organism ID" value="2681"/>
</dbReference>
<dbReference type="PathwayCommons" id="Q8N9F0"/>
<dbReference type="Reactome" id="R-HSA-8963693">
    <property type="pathway name" value="Aspartate and asparagine metabolism"/>
</dbReference>
<dbReference type="SignaLink" id="Q8N9F0"/>
<dbReference type="SIGNOR" id="Q8N9F0"/>
<dbReference type="BioGRID-ORCS" id="339983">
    <property type="hits" value="9 hits in 1117 CRISPR screens"/>
</dbReference>
<dbReference type="ChiTaRS" id="NAT8L">
    <property type="organism name" value="human"/>
</dbReference>
<dbReference type="GenomeRNAi" id="339983"/>
<dbReference type="Pharos" id="Q8N9F0">
    <property type="development level" value="Tbio"/>
</dbReference>
<dbReference type="PRO" id="PR:Q8N9F0"/>
<dbReference type="Proteomes" id="UP000005640">
    <property type="component" value="Chromosome 4"/>
</dbReference>
<dbReference type="RNAct" id="Q8N9F0">
    <property type="molecule type" value="protein"/>
</dbReference>
<dbReference type="Bgee" id="ENSG00000185818">
    <property type="expression patterns" value="Expressed in lateral nuclear group of thalamus and 144 other cell types or tissues"/>
</dbReference>
<dbReference type="GO" id="GO:0005737">
    <property type="term" value="C:cytoplasm"/>
    <property type="evidence" value="ECO:0000314"/>
    <property type="project" value="UniProtKB"/>
</dbReference>
<dbReference type="GO" id="GO:0005789">
    <property type="term" value="C:endoplasmic reticulum membrane"/>
    <property type="evidence" value="ECO:0007669"/>
    <property type="project" value="UniProtKB-SubCell"/>
</dbReference>
<dbReference type="GO" id="GO:0005759">
    <property type="term" value="C:mitochondrial matrix"/>
    <property type="evidence" value="ECO:0000304"/>
    <property type="project" value="Reactome"/>
</dbReference>
<dbReference type="GO" id="GO:0031966">
    <property type="term" value="C:mitochondrial membrane"/>
    <property type="evidence" value="ECO:0000314"/>
    <property type="project" value="UniProtKB"/>
</dbReference>
<dbReference type="GO" id="GO:0005739">
    <property type="term" value="C:mitochondrion"/>
    <property type="evidence" value="ECO:0000314"/>
    <property type="project" value="HPA"/>
</dbReference>
<dbReference type="GO" id="GO:0017188">
    <property type="term" value="F:L-aspartate N-acetyltransferase activity"/>
    <property type="evidence" value="ECO:0000314"/>
    <property type="project" value="UniProtKB"/>
</dbReference>
<dbReference type="GO" id="GO:0009066">
    <property type="term" value="P:aspartate family amino acid metabolic process"/>
    <property type="evidence" value="ECO:0000304"/>
    <property type="project" value="Reactome"/>
</dbReference>
<dbReference type="CDD" id="cd04301">
    <property type="entry name" value="NAT_SF"/>
    <property type="match status" value="1"/>
</dbReference>
<dbReference type="FunFam" id="3.40.630.30:FF:000057">
    <property type="entry name" value="N-acetylaspartate synthetase"/>
    <property type="match status" value="1"/>
</dbReference>
<dbReference type="Gene3D" id="3.40.630.30">
    <property type="match status" value="1"/>
</dbReference>
<dbReference type="InterPro" id="IPR016181">
    <property type="entry name" value="Acyl_CoA_acyltransferase"/>
</dbReference>
<dbReference type="InterPro" id="IPR000182">
    <property type="entry name" value="GNAT_dom"/>
</dbReference>
<dbReference type="InterPro" id="IPR050769">
    <property type="entry name" value="NAT_camello-type"/>
</dbReference>
<dbReference type="PANTHER" id="PTHR13947">
    <property type="entry name" value="GNAT FAMILY N-ACETYLTRANSFERASE"/>
    <property type="match status" value="1"/>
</dbReference>
<dbReference type="PANTHER" id="PTHR13947:SF11">
    <property type="entry name" value="N-ACETYLASPARTATE SYNTHETASE"/>
    <property type="match status" value="1"/>
</dbReference>
<dbReference type="Pfam" id="PF00583">
    <property type="entry name" value="Acetyltransf_1"/>
    <property type="match status" value="1"/>
</dbReference>
<dbReference type="SUPFAM" id="SSF55729">
    <property type="entry name" value="Acyl-CoA N-acyltransferases (Nat)"/>
    <property type="match status" value="1"/>
</dbReference>
<dbReference type="PROSITE" id="PS51186">
    <property type="entry name" value="GNAT"/>
    <property type="match status" value="1"/>
</dbReference>
<keyword id="KW-0012">Acyltransferase</keyword>
<keyword id="KW-0963">Cytoplasm</keyword>
<keyword id="KW-0256">Endoplasmic reticulum</keyword>
<keyword id="KW-0472">Membrane</keyword>
<keyword id="KW-0492">Microsome</keyword>
<keyword id="KW-0496">Mitochondrion</keyword>
<keyword id="KW-1267">Proteomics identification</keyword>
<keyword id="KW-1185">Reference proteome</keyword>
<keyword id="KW-0808">Transferase</keyword>
<keyword id="KW-0812">Transmembrane</keyword>
<keyword id="KW-1133">Transmembrane helix</keyword>
<comment type="function">
    <text evidence="2 6 7 8">Catalyzes the synthesis of N-acetylaspartate acid (NAA) from L-aspartate and acetyl-CoA (PubMed:19524112, PubMed:19807691, PubMed:20385109). Promotes dopamine uptake by regulating TNF-alpha expression (By similarity). Attenuates methamphetamine-induced inhibition of dopamine uptake (PubMed:20385109).</text>
</comment>
<comment type="catalytic activity">
    <reaction evidence="6 7 8">
        <text>L-aspartate + acetyl-CoA = N-acetyl-L-aspartate + CoA + H(+)</text>
        <dbReference type="Rhea" id="RHEA:14165"/>
        <dbReference type="ChEBI" id="CHEBI:15378"/>
        <dbReference type="ChEBI" id="CHEBI:16953"/>
        <dbReference type="ChEBI" id="CHEBI:29991"/>
        <dbReference type="ChEBI" id="CHEBI:57287"/>
        <dbReference type="ChEBI" id="CHEBI:57288"/>
        <dbReference type="EC" id="2.3.1.17"/>
    </reaction>
    <physiologicalReaction direction="left-to-right" evidence="10">
        <dbReference type="Rhea" id="RHEA:14166"/>
    </physiologicalReaction>
</comment>
<comment type="activity regulation">
    <text evidence="8">Aminooxyacetic acid (AOAA) blocks its activity in both cytoplasm and mitochondria.</text>
</comment>
<comment type="interaction">
    <interactant intactId="EBI-14384265">
        <id>Q8N9F0</id>
    </interactant>
    <interactant intactId="EBI-720700">
        <id>Q92628</id>
        <label>KIAA0232</label>
    </interactant>
    <organismsDiffer>false</organismsDiffer>
    <experiments>2</experiments>
</comment>
<comment type="interaction">
    <interactant intactId="EBI-14384265">
        <id>Q8N9F0</id>
    </interactant>
    <interactant intactId="EBI-594747">
        <id>P40855</id>
        <label>PEX19</label>
    </interactant>
    <organismsDiffer>false</organismsDiffer>
    <experiments>3</experiments>
</comment>
<comment type="subcellular location">
    <subcellularLocation>
        <location evidence="6">Cytoplasm</location>
    </subcellularLocation>
    <subcellularLocation>
        <location evidence="1">Microsome membrane</location>
        <topology evidence="3">Single-pass membrane protein</topology>
    </subcellularLocation>
    <subcellularLocation>
        <location evidence="6">Mitochondrion membrane</location>
        <topology evidence="3">Single-pass membrane protein</topology>
    </subcellularLocation>
    <subcellularLocation>
        <location evidence="2">Endoplasmic reticulum membrane</location>
        <topology evidence="3">Single-pass membrane protein</topology>
    </subcellularLocation>
    <text evidence="6">Its enzymatic activity contribution is quantitatively larger in mitochondrial compartment than in extramitochondrial compartment.</text>
</comment>
<comment type="tissue specificity">
    <text evidence="7">Expressed in brain.</text>
</comment>
<comment type="induction">
    <text evidence="8">By methamphetamine in brain, via dopamine receptor activation (at protein level).</text>
</comment>
<comment type="disease" evidence="7">
    <disease id="DI-03149">
        <name>N-acetylaspartate deficiency</name>
        <acronym>NACED</acronym>
        <description>A metabolic disorder resulting in truncal ataxia, marked developmental delay, seizures, and secondary microcephaly.</description>
        <dbReference type="MIM" id="614063"/>
    </disease>
    <text>The disease is caused by variants affecting the gene represented in this entry.</text>
</comment>
<comment type="similarity">
    <text evidence="9">Belongs to the NAT8 family.</text>
</comment>
<comment type="sequence caution" evidence="9">
    <conflict type="erroneous initiation">
        <sequence resource="EMBL-CDS" id="AAH93906"/>
    </conflict>
    <text>Truncated N-terminus.</text>
</comment>
<comment type="sequence caution" evidence="9">
    <conflict type="erroneous initiation">
        <sequence resource="EMBL-CDS" id="AAH93908"/>
    </conflict>
    <text>Truncated N-terminus.</text>
</comment>
<comment type="sequence caution" evidence="9">
    <conflict type="erroneous initiation">
        <sequence resource="EMBL-CDS" id="AAI03749"/>
    </conflict>
    <text>Truncated N-terminus.</text>
</comment>
<comment type="sequence caution" evidence="9">
    <conflict type="erroneous initiation">
        <sequence resource="EMBL-CDS" id="BAC04426"/>
    </conflict>
    <text>Truncated N-terminus.</text>
</comment>
<name>NAT8L_HUMAN</name>
<gene>
    <name evidence="11" type="primary">NAT8L</name>
    <name type="synonym">CML3</name>
</gene>
<protein>
    <recommendedName>
        <fullName evidence="9">N-acetylaspartate synthetase</fullName>
        <shortName>NAA synthetase</shortName>
        <ecNumber evidence="6 7 8">2.3.1.17</ecNumber>
    </recommendedName>
    <alternativeName>
        <fullName>Camello-like protein 3</fullName>
    </alternativeName>
    <alternativeName>
        <fullName>N-acetyltransferase 8-like protein</fullName>
    </alternativeName>
</protein>
<feature type="chain" id="PRO_0000305229" description="N-acetylaspartate synthetase">
    <location>
        <begin position="1"/>
        <end position="302"/>
    </location>
</feature>
<feature type="transmembrane region" description="Helical" evidence="3">
    <location>
        <begin position="121"/>
        <end position="141"/>
    </location>
</feature>
<feature type="domain" description="N-acetyltransferase" evidence="4">
    <location>
        <begin position="143"/>
        <end position="283"/>
    </location>
</feature>
<feature type="region of interest" description="Disordered" evidence="5">
    <location>
        <begin position="46"/>
        <end position="72"/>
    </location>
</feature>
<feature type="compositionally biased region" description="Pro residues" evidence="5">
    <location>
        <begin position="46"/>
        <end position="60"/>
    </location>
</feature>
<proteinExistence type="evidence at protein level"/>
<accession>Q8N9F0</accession>
<sequence length="302" mass="32837">MHCGPPDMVCETKIVAAEDHEALPGAKKDALLAAAGAMWPPLPAAPGPAAAPPAPPPAPVAQPHGGAGGAGPPGGRGVCIREFRAAEQEAARRIFYDGIMERIPNTAFRGLRQHPRAQLLYALLAALCFAVSRSLLLTCLVPAALLGLRYYYSRKVIRAYLECALHTDMADIEQYYMKPPGSCFWVAVLDGNVVGIVAARAHEEDNTVELLRMSVDSRFRGKGIAKALGRKVLEFAVVHNYSAVVLGTTAVKVAAHKLYESLGFRHMGASDHYVLPGMTLSLAERLFFQVRYHRYRLQLREE</sequence>
<organism>
    <name type="scientific">Homo sapiens</name>
    <name type="common">Human</name>
    <dbReference type="NCBI Taxonomy" id="9606"/>
    <lineage>
        <taxon>Eukaryota</taxon>
        <taxon>Metazoa</taxon>
        <taxon>Chordata</taxon>
        <taxon>Craniata</taxon>
        <taxon>Vertebrata</taxon>
        <taxon>Euteleostomi</taxon>
        <taxon>Mammalia</taxon>
        <taxon>Eutheria</taxon>
        <taxon>Euarchontoglires</taxon>
        <taxon>Primates</taxon>
        <taxon>Haplorrhini</taxon>
        <taxon>Catarrhini</taxon>
        <taxon>Hominidae</taxon>
        <taxon>Homo</taxon>
    </lineage>
</organism>